<protein>
    <recommendedName>
        <fullName evidence="16">Chemerin-like receptor 1</fullName>
    </recommendedName>
    <alternativeName>
        <fullName>Chemokine-like receptor 1</fullName>
    </alternativeName>
    <alternativeName>
        <fullName>G-protein coupled receptor ChemR23</fullName>
    </alternativeName>
    <alternativeName>
        <fullName>G-protein coupled receptor DEZ</fullName>
    </alternativeName>
</protein>
<comment type="function">
    <text evidence="7 8 11 12">Receptor for the chemoattractant adipokine chemerin/RARRES2 and for the omega-3 fatty acid derived molecule resolvin E1. Interaction with RARRES2 initiates activation of G proteins G(i)/G(o) and beta-arrestin pathways inducing cellular responses via second messenger pathways such as intracellular calcium mobilization, phosphorylation of MAP kinases MAPK1/MAPK3 (ERK1/2), TYRO3, MAPK14/P38MAPK and PI3K leading to multifunctional effects, like reduction of immune responses, enhancing of adipogenesis and angionesis (PubMed:27716822). Resolvin E1 down-regulates cytokine production in macrophages by reducing the activation of MAPK1/3 (ERK1/2) and NF-kappa-B. Positively regulates adipogenesis and adipocyte metabolism.</text>
</comment>
<comment type="function">
    <text evidence="14">(Microbial infection) Acts as a coreceptor for several SIV strains (SIVMAC316, SIVMAC239, SIVMACL7E-FR and SIVSM62A), as well as a primary HIV-1 strain (92UG024-2).</text>
</comment>
<comment type="subcellular location">
    <subcellularLocation>
        <location evidence="7 9 12">Cell membrane</location>
        <topology evidence="3">Multi-pass membrane protein</topology>
    </subcellularLocation>
    <text evidence="12">Internalizes efficiently in response to RARRES2.</text>
</comment>
<comment type="alternative products">
    <event type="alternative splicing"/>
    <isoform>
        <id>Q99788-1</id>
        <name>A</name>
        <sequence type="displayed"/>
    </isoform>
    <isoform>
        <id>Q99788-2</id>
        <name>B</name>
        <sequence type="described" ref="VSP_001985"/>
    </isoform>
</comment>
<comment type="tissue specificity">
    <text evidence="6 7 8 10 11 13">Prominently expressed in developing osseous and cartilaginous tissue. Also found in adult parathyroid glands. Expressed in cardiovascular system, brain, kidney, gastrointestinal tissues and myeloid tissues. Expressed in a broad array of tissues associated with hematopoietic and immune function including, spleen, thymus, appendix, lymph node, bone marrow and fetal liver. Among leukocyte populations abundant expression in monocyte-derived macrophage and immature dendritic cells (DCs). High expression in blood monocytes and low levels in polymorphonuclear cells and T-cells. Expressed on endothelial cells. Highly expressed in differentiating adipocytes.</text>
</comment>
<comment type="developmental stage">
    <text>Expressed during bone development.</text>
</comment>
<comment type="induction">
    <text evidence="6 8 11">Up-regulated by inflammatory cytokines TNF-alpha and IFN-gamma in monocytes. Up-regulated by TNF-alpha, IL-1-beta and IL-6 in endothelial cells.</text>
</comment>
<comment type="miscellaneous">
    <molecule>Isoform A</molecule>
    <text>May be produced at very low levels due to a premature stop codon in the mRNA, leading to nonsense-mediated mRNA decay.</text>
</comment>
<comment type="similarity">
    <text evidence="19">Belongs to the chemokine-like receptor (CMKLR) family.</text>
</comment>
<gene>
    <name evidence="20" type="primary">CMKLR1</name>
    <name type="synonym">CHEMR23</name>
    <name type="synonym">DEZ</name>
</gene>
<proteinExistence type="evidence at protein level"/>
<reference key="1">
    <citation type="journal article" date="1997" name="Biochem. Biophys. Res. Commun.">
        <title>A novel G protein-coupled receptor with homology to neuropeptide and chemoattractant receptors expressed during bone development.</title>
        <authorList>
            <person name="Methner A."/>
            <person name="Hermey G."/>
            <person name="Schinke B."/>
            <person name="Hermans-Borgmeyer I."/>
        </authorList>
    </citation>
    <scope>NUCLEOTIDE SEQUENCE [MRNA]</scope>
    <scope>ALTERNATIVE SPLICING</scope>
</reference>
<reference key="2">
    <citation type="journal article" date="1998" name="Eur. J. Immunol.">
        <title>ChemR23, a putative chemoattractant receptor, is expressed in monocyte-derived dendritic cells and macrophages and is a coreceptor for SIV and some primary HIV-1 strains.</title>
        <authorList>
            <person name="Samson M."/>
            <person name="Edinger A.L."/>
            <person name="Stordeur P."/>
            <person name="Rucker J."/>
            <person name="Verhasselt V."/>
            <person name="Sharron M."/>
            <person name="Govaerts C."/>
            <person name="Mollereau C."/>
            <person name="Vassart G."/>
            <person name="Doms R.W."/>
            <person name="Parmentier M."/>
        </authorList>
    </citation>
    <scope>NUCLEOTIDE SEQUENCE [GENOMIC DNA] (ISOFORM B)</scope>
    <scope>FUNCTION (MICROBIAL INFECTION)</scope>
</reference>
<reference key="3">
    <citation type="submission" date="2001-07" db="EMBL/GenBank/DDBJ databases">
        <title>Genome-wide discovery and analysis of human seven transmembrane helix receptor genes.</title>
        <authorList>
            <person name="Suwa M."/>
            <person name="Sato T."/>
            <person name="Okouchi I."/>
            <person name="Arita M."/>
            <person name="Futami K."/>
            <person name="Matsumoto S."/>
            <person name="Tsutsumi S."/>
            <person name="Aburatani H."/>
            <person name="Asai K."/>
            <person name="Akiyama Y."/>
        </authorList>
    </citation>
    <scope>NUCLEOTIDE SEQUENCE [GENOMIC DNA] (ISOFORM B)</scope>
</reference>
<reference key="4">
    <citation type="submission" date="2003-12" db="EMBL/GenBank/DDBJ databases">
        <title>cDNA clones of human proteins involved in signal transduction sequenced by the Guthrie cDNA resource center (www.cdna.org).</title>
        <authorList>
            <person name="King M.M."/>
            <person name="Aronstam R.S."/>
            <person name="Sharma S.V."/>
        </authorList>
    </citation>
    <scope>NUCLEOTIDE SEQUENCE [LARGE SCALE MRNA] (ISOFORM B)</scope>
    <source>
        <tissue>Kidney</tissue>
    </source>
</reference>
<reference key="5">
    <citation type="journal article" date="2004" name="Nat. Genet.">
        <title>Complete sequencing and characterization of 21,243 full-length human cDNAs.</title>
        <authorList>
            <person name="Ota T."/>
            <person name="Suzuki Y."/>
            <person name="Nishikawa T."/>
            <person name="Otsuki T."/>
            <person name="Sugiyama T."/>
            <person name="Irie R."/>
            <person name="Wakamatsu A."/>
            <person name="Hayashi K."/>
            <person name="Sato H."/>
            <person name="Nagai K."/>
            <person name="Kimura K."/>
            <person name="Makita H."/>
            <person name="Sekine M."/>
            <person name="Obayashi M."/>
            <person name="Nishi T."/>
            <person name="Shibahara T."/>
            <person name="Tanaka T."/>
            <person name="Ishii S."/>
            <person name="Yamamoto J."/>
            <person name="Saito K."/>
            <person name="Kawai Y."/>
            <person name="Isono Y."/>
            <person name="Nakamura Y."/>
            <person name="Nagahari K."/>
            <person name="Murakami K."/>
            <person name="Yasuda T."/>
            <person name="Iwayanagi T."/>
            <person name="Wagatsuma M."/>
            <person name="Shiratori A."/>
            <person name="Sudo H."/>
            <person name="Hosoiri T."/>
            <person name="Kaku Y."/>
            <person name="Kodaira H."/>
            <person name="Kondo H."/>
            <person name="Sugawara M."/>
            <person name="Takahashi M."/>
            <person name="Kanda K."/>
            <person name="Yokoi T."/>
            <person name="Furuya T."/>
            <person name="Kikkawa E."/>
            <person name="Omura Y."/>
            <person name="Abe K."/>
            <person name="Kamihara K."/>
            <person name="Katsuta N."/>
            <person name="Sato K."/>
            <person name="Tanikawa M."/>
            <person name="Yamazaki M."/>
            <person name="Ninomiya K."/>
            <person name="Ishibashi T."/>
            <person name="Yamashita H."/>
            <person name="Murakawa K."/>
            <person name="Fujimori K."/>
            <person name="Tanai H."/>
            <person name="Kimata M."/>
            <person name="Watanabe M."/>
            <person name="Hiraoka S."/>
            <person name="Chiba Y."/>
            <person name="Ishida S."/>
            <person name="Ono Y."/>
            <person name="Takiguchi S."/>
            <person name="Watanabe S."/>
            <person name="Yosida M."/>
            <person name="Hotuta T."/>
            <person name="Kusano J."/>
            <person name="Kanehori K."/>
            <person name="Takahashi-Fujii A."/>
            <person name="Hara H."/>
            <person name="Tanase T.-O."/>
            <person name="Nomura Y."/>
            <person name="Togiya S."/>
            <person name="Komai F."/>
            <person name="Hara R."/>
            <person name="Takeuchi K."/>
            <person name="Arita M."/>
            <person name="Imose N."/>
            <person name="Musashino K."/>
            <person name="Yuuki H."/>
            <person name="Oshima A."/>
            <person name="Sasaki N."/>
            <person name="Aotsuka S."/>
            <person name="Yoshikawa Y."/>
            <person name="Matsunawa H."/>
            <person name="Ichihara T."/>
            <person name="Shiohata N."/>
            <person name="Sano S."/>
            <person name="Moriya S."/>
            <person name="Momiyama H."/>
            <person name="Satoh N."/>
            <person name="Takami S."/>
            <person name="Terashima Y."/>
            <person name="Suzuki O."/>
            <person name="Nakagawa S."/>
            <person name="Senoh A."/>
            <person name="Mizoguchi H."/>
            <person name="Goto Y."/>
            <person name="Shimizu F."/>
            <person name="Wakebe H."/>
            <person name="Hishigaki H."/>
            <person name="Watanabe T."/>
            <person name="Sugiyama A."/>
            <person name="Takemoto M."/>
            <person name="Kawakami B."/>
            <person name="Yamazaki M."/>
            <person name="Watanabe K."/>
            <person name="Kumagai A."/>
            <person name="Itakura S."/>
            <person name="Fukuzumi Y."/>
            <person name="Fujimori Y."/>
            <person name="Komiyama M."/>
            <person name="Tashiro H."/>
            <person name="Tanigami A."/>
            <person name="Fujiwara T."/>
            <person name="Ono T."/>
            <person name="Yamada K."/>
            <person name="Fujii Y."/>
            <person name="Ozaki K."/>
            <person name="Hirao M."/>
            <person name="Ohmori Y."/>
            <person name="Kawabata A."/>
            <person name="Hikiji T."/>
            <person name="Kobatake N."/>
            <person name="Inagaki H."/>
            <person name="Ikema Y."/>
            <person name="Okamoto S."/>
            <person name="Okitani R."/>
            <person name="Kawakami T."/>
            <person name="Noguchi S."/>
            <person name="Itoh T."/>
            <person name="Shigeta K."/>
            <person name="Senba T."/>
            <person name="Matsumura K."/>
            <person name="Nakajima Y."/>
            <person name="Mizuno T."/>
            <person name="Morinaga M."/>
            <person name="Sasaki M."/>
            <person name="Togashi T."/>
            <person name="Oyama M."/>
            <person name="Hata H."/>
            <person name="Watanabe M."/>
            <person name="Komatsu T."/>
            <person name="Mizushima-Sugano J."/>
            <person name="Satoh T."/>
            <person name="Shirai Y."/>
            <person name="Takahashi Y."/>
            <person name="Nakagawa K."/>
            <person name="Okumura K."/>
            <person name="Nagase T."/>
            <person name="Nomura N."/>
            <person name="Kikuchi H."/>
            <person name="Masuho Y."/>
            <person name="Yamashita R."/>
            <person name="Nakai K."/>
            <person name="Yada T."/>
            <person name="Nakamura Y."/>
            <person name="Ohara O."/>
            <person name="Isogai T."/>
            <person name="Sugano S."/>
        </authorList>
    </citation>
    <scope>NUCLEOTIDE SEQUENCE [LARGE SCALE MRNA] (ISOFORM A)</scope>
    <source>
        <tissue>Placenta</tissue>
    </source>
</reference>
<reference key="6">
    <citation type="submission" date="2004-10" db="EMBL/GenBank/DDBJ databases">
        <title>Cloning of human full-length CDSs in BD Creator(TM) system donor vector.</title>
        <authorList>
            <person name="Kalnine N."/>
            <person name="Chen X."/>
            <person name="Rolfs A."/>
            <person name="Halleck A."/>
            <person name="Hines L."/>
            <person name="Eisenstein S."/>
            <person name="Koundinya M."/>
            <person name="Raphael J."/>
            <person name="Moreira D."/>
            <person name="Kelley T."/>
            <person name="LaBaer J."/>
            <person name="Lin Y."/>
            <person name="Phelan M."/>
            <person name="Farmer A."/>
        </authorList>
    </citation>
    <scope>NUCLEOTIDE SEQUENCE [LARGE SCALE MRNA] (ISOFORM B)</scope>
</reference>
<reference key="7">
    <citation type="journal article" date="2006" name="Nature">
        <title>The finished DNA sequence of human chromosome 12.</title>
        <authorList>
            <person name="Scherer S.E."/>
            <person name="Muzny D.M."/>
            <person name="Buhay C.J."/>
            <person name="Chen R."/>
            <person name="Cree A."/>
            <person name="Ding Y."/>
            <person name="Dugan-Rocha S."/>
            <person name="Gill R."/>
            <person name="Gunaratne P."/>
            <person name="Harris R.A."/>
            <person name="Hawes A.C."/>
            <person name="Hernandez J."/>
            <person name="Hodgson A.V."/>
            <person name="Hume J."/>
            <person name="Jackson A."/>
            <person name="Khan Z.M."/>
            <person name="Kovar-Smith C."/>
            <person name="Lewis L.R."/>
            <person name="Lozado R.J."/>
            <person name="Metzker M.L."/>
            <person name="Milosavljevic A."/>
            <person name="Miner G.R."/>
            <person name="Montgomery K.T."/>
            <person name="Morgan M.B."/>
            <person name="Nazareth L.V."/>
            <person name="Scott G."/>
            <person name="Sodergren E."/>
            <person name="Song X.-Z."/>
            <person name="Steffen D."/>
            <person name="Lovering R.C."/>
            <person name="Wheeler D.A."/>
            <person name="Worley K.C."/>
            <person name="Yuan Y."/>
            <person name="Zhang Z."/>
            <person name="Adams C.Q."/>
            <person name="Ansari-Lari M.A."/>
            <person name="Ayele M."/>
            <person name="Brown M.J."/>
            <person name="Chen G."/>
            <person name="Chen Z."/>
            <person name="Clerc-Blankenburg K.P."/>
            <person name="Davis C."/>
            <person name="Delgado O."/>
            <person name="Dinh H.H."/>
            <person name="Draper H."/>
            <person name="Gonzalez-Garay M.L."/>
            <person name="Havlak P."/>
            <person name="Jackson L.R."/>
            <person name="Jacob L.S."/>
            <person name="Kelly S.H."/>
            <person name="Li L."/>
            <person name="Li Z."/>
            <person name="Liu J."/>
            <person name="Liu W."/>
            <person name="Lu J."/>
            <person name="Maheshwari M."/>
            <person name="Nguyen B.-V."/>
            <person name="Okwuonu G.O."/>
            <person name="Pasternak S."/>
            <person name="Perez L.M."/>
            <person name="Plopper F.J.H."/>
            <person name="Santibanez J."/>
            <person name="Shen H."/>
            <person name="Tabor P.E."/>
            <person name="Verduzco D."/>
            <person name="Waldron L."/>
            <person name="Wang Q."/>
            <person name="Williams G.A."/>
            <person name="Zhang J."/>
            <person name="Zhou J."/>
            <person name="Allen C.C."/>
            <person name="Amin A.G."/>
            <person name="Anyalebechi V."/>
            <person name="Bailey M."/>
            <person name="Barbaria J.A."/>
            <person name="Bimage K.E."/>
            <person name="Bryant N.P."/>
            <person name="Burch P.E."/>
            <person name="Burkett C.E."/>
            <person name="Burrell K.L."/>
            <person name="Calderon E."/>
            <person name="Cardenas V."/>
            <person name="Carter K."/>
            <person name="Casias K."/>
            <person name="Cavazos I."/>
            <person name="Cavazos S.R."/>
            <person name="Ceasar H."/>
            <person name="Chacko J."/>
            <person name="Chan S.N."/>
            <person name="Chavez D."/>
            <person name="Christopoulos C."/>
            <person name="Chu J."/>
            <person name="Cockrell R."/>
            <person name="Cox C.D."/>
            <person name="Dang M."/>
            <person name="Dathorne S.R."/>
            <person name="David R."/>
            <person name="Davis C.M."/>
            <person name="Davy-Carroll L."/>
            <person name="Deshazo D.R."/>
            <person name="Donlin J.E."/>
            <person name="D'Souza L."/>
            <person name="Eaves K.A."/>
            <person name="Egan A."/>
            <person name="Emery-Cohen A.J."/>
            <person name="Escotto M."/>
            <person name="Flagg N."/>
            <person name="Forbes L.D."/>
            <person name="Gabisi A.M."/>
            <person name="Garza M."/>
            <person name="Hamilton C."/>
            <person name="Henderson N."/>
            <person name="Hernandez O."/>
            <person name="Hines S."/>
            <person name="Hogues M.E."/>
            <person name="Huang M."/>
            <person name="Idlebird D.G."/>
            <person name="Johnson R."/>
            <person name="Jolivet A."/>
            <person name="Jones S."/>
            <person name="Kagan R."/>
            <person name="King L.M."/>
            <person name="Leal B."/>
            <person name="Lebow H."/>
            <person name="Lee S."/>
            <person name="LeVan J.M."/>
            <person name="Lewis L.C."/>
            <person name="London P."/>
            <person name="Lorensuhewa L.M."/>
            <person name="Loulseged H."/>
            <person name="Lovett D.A."/>
            <person name="Lucier A."/>
            <person name="Lucier R.L."/>
            <person name="Ma J."/>
            <person name="Madu R.C."/>
            <person name="Mapua P."/>
            <person name="Martindale A.D."/>
            <person name="Martinez E."/>
            <person name="Massey E."/>
            <person name="Mawhiney S."/>
            <person name="Meador M.G."/>
            <person name="Mendez S."/>
            <person name="Mercado C."/>
            <person name="Mercado I.C."/>
            <person name="Merritt C.E."/>
            <person name="Miner Z.L."/>
            <person name="Minja E."/>
            <person name="Mitchell T."/>
            <person name="Mohabbat F."/>
            <person name="Mohabbat K."/>
            <person name="Montgomery B."/>
            <person name="Moore N."/>
            <person name="Morris S."/>
            <person name="Munidasa M."/>
            <person name="Ngo R.N."/>
            <person name="Nguyen N.B."/>
            <person name="Nickerson E."/>
            <person name="Nwaokelemeh O.O."/>
            <person name="Nwokenkwo S."/>
            <person name="Obregon M."/>
            <person name="Oguh M."/>
            <person name="Oragunye N."/>
            <person name="Oviedo R.J."/>
            <person name="Parish B.J."/>
            <person name="Parker D.N."/>
            <person name="Parrish J."/>
            <person name="Parks K.L."/>
            <person name="Paul H.A."/>
            <person name="Payton B.A."/>
            <person name="Perez A."/>
            <person name="Perrin W."/>
            <person name="Pickens A."/>
            <person name="Primus E.L."/>
            <person name="Pu L.-L."/>
            <person name="Puazo M."/>
            <person name="Quiles M.M."/>
            <person name="Quiroz J.B."/>
            <person name="Rabata D."/>
            <person name="Reeves K."/>
            <person name="Ruiz S.J."/>
            <person name="Shao H."/>
            <person name="Sisson I."/>
            <person name="Sonaike T."/>
            <person name="Sorelle R.P."/>
            <person name="Sutton A.E."/>
            <person name="Svatek A.F."/>
            <person name="Svetz L.A."/>
            <person name="Tamerisa K.S."/>
            <person name="Taylor T.R."/>
            <person name="Teague B."/>
            <person name="Thomas N."/>
            <person name="Thorn R.D."/>
            <person name="Trejos Z.Y."/>
            <person name="Trevino B.K."/>
            <person name="Ukegbu O.N."/>
            <person name="Urban J.B."/>
            <person name="Vasquez L.I."/>
            <person name="Vera V.A."/>
            <person name="Villasana D.M."/>
            <person name="Wang L."/>
            <person name="Ward-Moore S."/>
            <person name="Warren J.T."/>
            <person name="Wei X."/>
            <person name="White F."/>
            <person name="Williamson A.L."/>
            <person name="Wleczyk R."/>
            <person name="Wooden H.S."/>
            <person name="Wooden S.H."/>
            <person name="Yen J."/>
            <person name="Yoon L."/>
            <person name="Yoon V."/>
            <person name="Zorrilla S.E."/>
            <person name="Nelson D."/>
            <person name="Kucherlapati R."/>
            <person name="Weinstock G."/>
            <person name="Gibbs R.A."/>
        </authorList>
    </citation>
    <scope>NUCLEOTIDE SEQUENCE [LARGE SCALE GENOMIC DNA]</scope>
</reference>
<reference key="8">
    <citation type="submission" date="2005-07" db="EMBL/GenBank/DDBJ databases">
        <authorList>
            <person name="Mural R.J."/>
            <person name="Istrail S."/>
            <person name="Sutton G.G."/>
            <person name="Florea L."/>
            <person name="Halpern A.L."/>
            <person name="Mobarry C.M."/>
            <person name="Lippert R."/>
            <person name="Walenz B."/>
            <person name="Shatkay H."/>
            <person name="Dew I."/>
            <person name="Miller J.R."/>
            <person name="Flanigan M.J."/>
            <person name="Edwards N.J."/>
            <person name="Bolanos R."/>
            <person name="Fasulo D."/>
            <person name="Halldorsson B.V."/>
            <person name="Hannenhalli S."/>
            <person name="Turner R."/>
            <person name="Yooseph S."/>
            <person name="Lu F."/>
            <person name="Nusskern D.R."/>
            <person name="Shue B.C."/>
            <person name="Zheng X.H."/>
            <person name="Zhong F."/>
            <person name="Delcher A.L."/>
            <person name="Huson D.H."/>
            <person name="Kravitz S.A."/>
            <person name="Mouchard L."/>
            <person name="Reinert K."/>
            <person name="Remington K.A."/>
            <person name="Clark A.G."/>
            <person name="Waterman M.S."/>
            <person name="Eichler E.E."/>
            <person name="Adams M.D."/>
            <person name="Hunkapiller M.W."/>
            <person name="Myers E.W."/>
            <person name="Venter J.C."/>
        </authorList>
    </citation>
    <scope>NUCLEOTIDE SEQUENCE [LARGE SCALE GENOMIC DNA]</scope>
</reference>
<reference key="9">
    <citation type="journal article" date="2004" name="Genome Res.">
        <title>The status, quality, and expansion of the NIH full-length cDNA project: the Mammalian Gene Collection (MGC).</title>
        <authorList>
            <consortium name="The MGC Project Team"/>
        </authorList>
    </citation>
    <scope>NUCLEOTIDE SEQUENCE [LARGE SCALE MRNA] (ISOFORM B)</scope>
</reference>
<reference key="10">
    <citation type="journal article" date="1996" name="Cytogenet. Cell Genet.">
        <title>Molecular cloning of a novel receptor (CMKLR1) with homology to the chemotactic factor receptors.</title>
        <authorList>
            <person name="Gantz I."/>
            <person name="Konda Y."/>
            <person name="Yang Y.K."/>
            <person name="Miller D.E."/>
            <person name="Dierick H.A."/>
            <person name="Yamada T."/>
        </authorList>
    </citation>
    <scope>TISSUE SPECIFICITY</scope>
</reference>
<reference key="11">
    <citation type="journal article" date="2003" name="FEBS Lett.">
        <title>Characterization of human circulating TIG2 as a ligand for the orphan receptor ChemR23.</title>
        <authorList>
            <person name="Meder W."/>
            <person name="Wendland M."/>
            <person name="Busmann A."/>
            <person name="Kutzleb C."/>
            <person name="Spodsberg N."/>
            <person name="John H."/>
            <person name="Richter R."/>
            <person name="Schleuder D."/>
            <person name="Meyer M."/>
            <person name="Forssmann W.G."/>
        </authorList>
    </citation>
    <scope>LIGAND-BINDING</scope>
</reference>
<reference key="12">
    <citation type="journal article" date="2003" name="J. Exp. Med.">
        <title>Specific recruitment of antigen-presenting cells by chemerin, a novel processed ligand from human inflammatory fluids.</title>
        <authorList>
            <person name="Wittamer V."/>
            <person name="Franssen J.D."/>
            <person name="Vulcano M."/>
            <person name="Mirjolet J.F."/>
            <person name="Le Poul E."/>
            <person name="Migeotte I."/>
            <person name="Brezillon S."/>
            <person name="Tyldesley R."/>
            <person name="Blanpain C."/>
            <person name="Detheux M."/>
            <person name="Mantovani A."/>
            <person name="Sozzani S."/>
            <person name="Vassart G."/>
            <person name="Parmentier M."/>
            <person name="Communi D."/>
        </authorList>
    </citation>
    <scope>TISSUE SPECIFICITY</scope>
    <scope>LIGAND-BINDING</scope>
    <scope>INDUCTION</scope>
</reference>
<reference key="13">
    <citation type="journal article" date="2004" name="Genome Biol.">
        <title>An unappreciated role for RNA surveillance.</title>
        <authorList>
            <person name="Hillman R.T."/>
            <person name="Green R.E."/>
            <person name="Brenner S.E."/>
        </authorList>
    </citation>
    <scope>SPLICE ISOFORM(S) THAT ARE POTENTIAL NMD TARGET(S)</scope>
</reference>
<reference key="14">
    <citation type="journal article" date="2005" name="J. Exp. Med.">
        <title>Role of ChemR23 in directing the migration of myeloid and plasmacytoid dendritic cells to lymphoid organs and inflamed skin.</title>
        <authorList>
            <person name="Vermi W."/>
            <person name="Riboldi E."/>
            <person name="Wittamer V."/>
            <person name="Gentili F."/>
            <person name="Luini W."/>
            <person name="Marrelli S."/>
            <person name="Vecchi A."/>
            <person name="Franssen J.D."/>
            <person name="Communi D."/>
            <person name="Massardi L."/>
            <person name="Sironi M."/>
            <person name="Mantovani A."/>
            <person name="Parmentier M."/>
            <person name="Facchetti F."/>
            <person name="Sozzani S."/>
        </authorList>
    </citation>
    <scope>TISSUE SPECIFICITY</scope>
    <scope>SUBCELLULAR LOCATION</scope>
    <scope>FUNCTION</scope>
</reference>
<reference key="15">
    <citation type="journal article" date="2005" name="J. Exp. Med.">
        <title>Stereochemical assignment, antiinflammatory properties, and receptor for the omega-3 lipid mediator resolvin E1.</title>
        <authorList>
            <person name="Arita M."/>
            <person name="Bianchini F."/>
            <person name="Aliberti J."/>
            <person name="Sher A."/>
            <person name="Chiang N."/>
            <person name="Hong S."/>
            <person name="Yang R."/>
            <person name="Petasis N.A."/>
            <person name="Serhan C.N."/>
        </authorList>
    </citation>
    <scope>LIGAND-BINDING</scope>
    <scope>INDUCTION</scope>
    <scope>FUNCTION</scope>
    <scope>TISSUE SPECIFICITY</scope>
</reference>
<reference key="16">
    <citation type="journal article" date="2006" name="Exp. Hematol.">
        <title>Chemokine-like receptor 1 expression by macrophages in vivo: regulation by TGF-beta and TLR ligands.</title>
        <authorList>
            <person name="Zabel B.A."/>
            <person name="Ohyama T."/>
            <person name="Zuniga L."/>
            <person name="Kim J.Y."/>
            <person name="Johnston B."/>
            <person name="Allen S.J."/>
            <person name="Guido D.G."/>
            <person name="Handel T.M."/>
            <person name="Butcher E.C."/>
        </authorList>
    </citation>
    <scope>SUBCELLULAR LOCATION</scope>
</reference>
<reference key="17">
    <citation type="journal article" date="2008" name="FEBS Lett.">
        <title>Chemerin enhances insulin signaling and potentiates insulin-stimulated glucose uptake in 3T3-L1 adipocytes.</title>
        <authorList>
            <person name="Takahashi M."/>
            <person name="Takahashi Y."/>
            <person name="Takahashi K."/>
            <person name="Zolotaryov F.N."/>
            <person name="Hong K.S."/>
            <person name="Kitazawa R."/>
            <person name="Iida K."/>
            <person name="Okimura Y."/>
            <person name="Kaji H."/>
            <person name="Kitazawa S."/>
            <person name="Kasuga M."/>
            <person name="Chihara K."/>
        </authorList>
    </citation>
    <scope>TISSUE SPECIFICITY</scope>
</reference>
<reference key="18">
    <citation type="journal article" date="2010" name="Biochem. Biophys. Res. Commun.">
        <title>Identification of chemerin receptor (ChemR23) in human endothelial cells: chemerin-induced endothelial angiogenesis.</title>
        <authorList>
            <person name="Kaur J."/>
            <person name="Adya R."/>
            <person name="Tan B.K."/>
            <person name="Chen J."/>
            <person name="Randeva H.S."/>
        </authorList>
    </citation>
    <scope>TISSUE SPECIFICITY</scope>
    <scope>INDUCTION</scope>
    <scope>FUNCTION</scope>
</reference>
<reference key="19">
    <citation type="journal article" date="2016" name="PLoS ONE">
        <title>Signaling properties of chemerin receptors CMKLR1, GPR1 and CCRL2.</title>
        <authorList>
            <person name="De Henau O."/>
            <person name="Degroot G.N."/>
            <person name="Imbault V."/>
            <person name="Robert V."/>
            <person name="De Poorter C."/>
            <person name="Mcheik S."/>
            <person name="Gales C."/>
            <person name="Parmentier M."/>
            <person name="Springael J.Y."/>
        </authorList>
    </citation>
    <scope>FUNCTION</scope>
    <scope>SUBCELLULAR LOCATION</scope>
</reference>
<reference key="20">
    <citation type="journal article" date="2018" name="Pharmacol. Rev.">
        <title>International Union of Basic and Clinical Pharmacology CIII: Chemerin Receptors CMKLR1 (Chemerin1) and GPR1 (Chemerin2) Nomenclature, Pharmacology, and Function.</title>
        <authorList>
            <person name="Kennedy A.J."/>
            <person name="Davenport A.P."/>
        </authorList>
    </citation>
    <scope>NOMENCLATURE</scope>
</reference>
<accession>Q99788</accession>
<accession>A8K6Y5</accession>
<accession>O75748</accession>
<accession>Q3KP37</accession>
<accession>Q5U0H0</accession>
<accession>Q99789</accession>
<dbReference type="EMBL" id="U79526">
    <property type="protein sequence ID" value="AAC51258.1"/>
    <property type="molecule type" value="mRNA"/>
</dbReference>
<dbReference type="EMBL" id="U79527">
    <property type="protein sequence ID" value="AAC51259.1"/>
    <property type="molecule type" value="mRNA"/>
</dbReference>
<dbReference type="EMBL" id="Y14838">
    <property type="protein sequence ID" value="CAA75112.1"/>
    <property type="molecule type" value="Genomic_DNA"/>
</dbReference>
<dbReference type="EMBL" id="AB065871">
    <property type="protein sequence ID" value="BAC06089.1"/>
    <property type="molecule type" value="Genomic_DNA"/>
</dbReference>
<dbReference type="EMBL" id="AY497547">
    <property type="protein sequence ID" value="AAR90850.1"/>
    <property type="molecule type" value="mRNA"/>
</dbReference>
<dbReference type="EMBL" id="AK291800">
    <property type="protein sequence ID" value="BAF84489.1"/>
    <property type="molecule type" value="mRNA"/>
</dbReference>
<dbReference type="EMBL" id="BT019556">
    <property type="protein sequence ID" value="AAV38363.1"/>
    <property type="molecule type" value="mRNA"/>
</dbReference>
<dbReference type="EMBL" id="BT019557">
    <property type="protein sequence ID" value="AAV38364.1"/>
    <property type="molecule type" value="mRNA"/>
</dbReference>
<dbReference type="EMBL" id="AC009729">
    <property type="status" value="NOT_ANNOTATED_CDS"/>
    <property type="molecule type" value="Genomic_DNA"/>
</dbReference>
<dbReference type="EMBL" id="AC063957">
    <property type="status" value="NOT_ANNOTATED_CDS"/>
    <property type="molecule type" value="Genomic_DNA"/>
</dbReference>
<dbReference type="EMBL" id="CH471054">
    <property type="protein sequence ID" value="EAW97810.1"/>
    <property type="molecule type" value="Genomic_DNA"/>
</dbReference>
<dbReference type="EMBL" id="CH471054">
    <property type="protein sequence ID" value="EAW97811.1"/>
    <property type="molecule type" value="Genomic_DNA"/>
</dbReference>
<dbReference type="EMBL" id="BC106927">
    <property type="protein sequence ID" value="AAI06928.1"/>
    <property type="molecule type" value="mRNA"/>
</dbReference>
<dbReference type="EMBL" id="BC106928">
    <property type="protein sequence ID" value="AAI06929.1"/>
    <property type="molecule type" value="mRNA"/>
</dbReference>
<dbReference type="CCDS" id="CCDS41829.1">
    <molecule id="Q99788-2"/>
</dbReference>
<dbReference type="CCDS" id="CCDS44965.1">
    <molecule id="Q99788-1"/>
</dbReference>
<dbReference type="RefSeq" id="NP_001135815.1">
    <molecule id="Q99788-1"/>
    <property type="nucleotide sequence ID" value="NM_001142343.2"/>
</dbReference>
<dbReference type="RefSeq" id="NP_001135816.1">
    <molecule id="Q99788-1"/>
    <property type="nucleotide sequence ID" value="NM_001142344.2"/>
</dbReference>
<dbReference type="RefSeq" id="NP_001135817.1">
    <molecule id="Q99788-1"/>
    <property type="nucleotide sequence ID" value="NM_001142345.2"/>
</dbReference>
<dbReference type="RefSeq" id="NP_004063.1">
    <molecule id="Q99788-2"/>
    <property type="nucleotide sequence ID" value="NM_004072.3"/>
</dbReference>
<dbReference type="RefSeq" id="XP_016874309.1">
    <property type="nucleotide sequence ID" value="XM_017018820.1"/>
</dbReference>
<dbReference type="RefSeq" id="XP_047284269.1">
    <molecule id="Q99788-1"/>
    <property type="nucleotide sequence ID" value="XM_047428313.1"/>
</dbReference>
<dbReference type="RefSeq" id="XP_054227103.1">
    <molecule id="Q99788-1"/>
    <property type="nucleotide sequence ID" value="XM_054371128.1"/>
</dbReference>
<dbReference type="PDB" id="7YKD">
    <property type="method" value="EM"/>
    <property type="resolution" value="2.81 A"/>
    <property type="chains" value="A=1-373"/>
</dbReference>
<dbReference type="PDB" id="8SG1">
    <property type="method" value="EM"/>
    <property type="resolution" value="2.94 A"/>
    <property type="chains" value="R=36-327"/>
</dbReference>
<dbReference type="PDB" id="8ZJG">
    <property type="method" value="EM"/>
    <property type="resolution" value="3.18 A"/>
    <property type="chains" value="A=1-373"/>
</dbReference>
<dbReference type="PDB" id="9L3W">
    <property type="method" value="EM"/>
    <property type="resolution" value="3.50 A"/>
    <property type="chains" value="R=1-373"/>
</dbReference>
<dbReference type="PDBsum" id="7YKD"/>
<dbReference type="PDBsum" id="8SG1"/>
<dbReference type="PDBsum" id="8ZJG"/>
<dbReference type="PDBsum" id="9L3W"/>
<dbReference type="EMDB" id="EMD-33891"/>
<dbReference type="EMDB" id="EMD-40450"/>
<dbReference type="EMDB" id="EMD-60144"/>
<dbReference type="EMDB" id="EMD-62793"/>
<dbReference type="EMDB" id="EMD-62799"/>
<dbReference type="SMR" id="Q99788"/>
<dbReference type="BioGRID" id="107644">
    <property type="interactions" value="110"/>
</dbReference>
<dbReference type="CORUM" id="Q99788"/>
<dbReference type="FunCoup" id="Q99788">
    <property type="interactions" value="891"/>
</dbReference>
<dbReference type="IntAct" id="Q99788">
    <property type="interactions" value="98"/>
</dbReference>
<dbReference type="STRING" id="9606.ENSP00000449716"/>
<dbReference type="BindingDB" id="Q99788"/>
<dbReference type="ChEMBL" id="CHEMBL3540"/>
<dbReference type="GuidetoPHARMACOLOGY" id="79"/>
<dbReference type="SwissLipids" id="SLP:000001606"/>
<dbReference type="TCDB" id="9.A.14.13.15">
    <property type="family name" value="the g-protein-coupled receptor (gpcr) family"/>
</dbReference>
<dbReference type="GlyCosmos" id="Q99788">
    <property type="glycosylation" value="2 sites, No reported glycans"/>
</dbReference>
<dbReference type="GlyGen" id="Q99788">
    <property type="glycosylation" value="2 sites"/>
</dbReference>
<dbReference type="iPTMnet" id="Q99788"/>
<dbReference type="PhosphoSitePlus" id="Q99788"/>
<dbReference type="BioMuta" id="CMKLR1"/>
<dbReference type="DMDM" id="17380487"/>
<dbReference type="jPOST" id="Q99788"/>
<dbReference type="MassIVE" id="Q99788"/>
<dbReference type="PaxDb" id="9606-ENSP00000311733"/>
<dbReference type="PeptideAtlas" id="Q99788"/>
<dbReference type="ProteomicsDB" id="78474">
    <molecule id="Q99788-1"/>
</dbReference>
<dbReference type="ProteomicsDB" id="78475">
    <molecule id="Q99788-2"/>
</dbReference>
<dbReference type="ABCD" id="Q99788">
    <property type="antibodies" value="1 sequenced antibody"/>
</dbReference>
<dbReference type="Antibodypedia" id="9299">
    <property type="antibodies" value="558 antibodies from 36 providers"/>
</dbReference>
<dbReference type="DNASU" id="1240"/>
<dbReference type="Ensembl" id="ENST00000312143.11">
    <molecule id="Q99788-1"/>
    <property type="protein sequence ID" value="ENSP00000311733.7"/>
    <property type="gene ID" value="ENSG00000174600.14"/>
</dbReference>
<dbReference type="Ensembl" id="ENST00000412676.5">
    <molecule id="Q99788-1"/>
    <property type="protein sequence ID" value="ENSP00000401293.1"/>
    <property type="gene ID" value="ENSG00000174600.14"/>
</dbReference>
<dbReference type="Ensembl" id="ENST00000550402.6">
    <molecule id="Q99788-1"/>
    <property type="protein sequence ID" value="ENSP00000449716.1"/>
    <property type="gene ID" value="ENSG00000174600.14"/>
</dbReference>
<dbReference type="Ensembl" id="ENST00000552995.5">
    <molecule id="Q99788-2"/>
    <property type="protein sequence ID" value="ENSP00000447579.1"/>
    <property type="gene ID" value="ENSG00000174600.14"/>
</dbReference>
<dbReference type="GeneID" id="1240"/>
<dbReference type="KEGG" id="hsa:1240"/>
<dbReference type="MANE-Select" id="ENST00000550402.6">
    <property type="protein sequence ID" value="ENSP00000449716.1"/>
    <property type="RefSeq nucleotide sequence ID" value="NM_001142343.2"/>
    <property type="RefSeq protein sequence ID" value="NP_001135815.1"/>
</dbReference>
<dbReference type="UCSC" id="uc001tmv.4">
    <molecule id="Q99788-1"/>
    <property type="organism name" value="human"/>
</dbReference>
<dbReference type="AGR" id="HGNC:2121"/>
<dbReference type="CTD" id="1240"/>
<dbReference type="DisGeNET" id="1240"/>
<dbReference type="GeneCards" id="CMKLR1"/>
<dbReference type="HGNC" id="HGNC:2121">
    <property type="gene designation" value="CMKLR1"/>
</dbReference>
<dbReference type="HPA" id="ENSG00000174600">
    <property type="expression patterns" value="Tissue enhanced (lymphoid)"/>
</dbReference>
<dbReference type="MIM" id="602351">
    <property type="type" value="gene"/>
</dbReference>
<dbReference type="neXtProt" id="NX_Q99788"/>
<dbReference type="OpenTargets" id="ENSG00000174600"/>
<dbReference type="PharmGKB" id="PA26640"/>
<dbReference type="VEuPathDB" id="HostDB:ENSG00000174600"/>
<dbReference type="eggNOG" id="KOG3656">
    <property type="taxonomic scope" value="Eukaryota"/>
</dbReference>
<dbReference type="GeneTree" id="ENSGT01020000230438"/>
<dbReference type="HOGENOM" id="CLU_009579_8_0_1"/>
<dbReference type="InParanoid" id="Q99788"/>
<dbReference type="OMA" id="IIMSCPS"/>
<dbReference type="OrthoDB" id="6088892at2759"/>
<dbReference type="PAN-GO" id="Q99788">
    <property type="GO annotations" value="10 GO annotations based on evolutionary models"/>
</dbReference>
<dbReference type="PhylomeDB" id="Q99788"/>
<dbReference type="TreeFam" id="TF330976"/>
<dbReference type="PathwayCommons" id="Q99788"/>
<dbReference type="Reactome" id="R-HSA-373076">
    <property type="pathway name" value="Class A/1 (Rhodopsin-like receptors)"/>
</dbReference>
<dbReference type="SignaLink" id="Q99788"/>
<dbReference type="BioGRID-ORCS" id="1240">
    <property type="hits" value="99 hits in 1140 CRISPR screens"/>
</dbReference>
<dbReference type="ChiTaRS" id="CMKLR1">
    <property type="organism name" value="human"/>
</dbReference>
<dbReference type="GeneWiki" id="CMKLR1"/>
<dbReference type="GenomeRNAi" id="1240"/>
<dbReference type="Pharos" id="Q99788">
    <property type="development level" value="Tchem"/>
</dbReference>
<dbReference type="PRO" id="PR:Q99788"/>
<dbReference type="Proteomes" id="UP000005640">
    <property type="component" value="Chromosome 12"/>
</dbReference>
<dbReference type="RNAct" id="Q99788">
    <property type="molecule type" value="protein"/>
</dbReference>
<dbReference type="Bgee" id="ENSG00000174600">
    <property type="expression patterns" value="Expressed in right coronary artery and 128 other cell types or tissues"/>
</dbReference>
<dbReference type="ExpressionAtlas" id="Q99788">
    <property type="expression patterns" value="baseline and differential"/>
</dbReference>
<dbReference type="GO" id="GO:0016020">
    <property type="term" value="C:membrane"/>
    <property type="evidence" value="ECO:0000303"/>
    <property type="project" value="UniProtKB"/>
</dbReference>
<dbReference type="GO" id="GO:0005886">
    <property type="term" value="C:plasma membrane"/>
    <property type="evidence" value="ECO:0000314"/>
    <property type="project" value="UniProtKB"/>
</dbReference>
<dbReference type="GO" id="GO:0097004">
    <property type="term" value="F:adipokinetic hormone binding"/>
    <property type="evidence" value="ECO:0000314"/>
    <property type="project" value="UniProtKB"/>
</dbReference>
<dbReference type="GO" id="GO:0097003">
    <property type="term" value="F:adipokinetic hormone receptor activity"/>
    <property type="evidence" value="ECO:0000314"/>
    <property type="project" value="UniProtKB"/>
</dbReference>
<dbReference type="GO" id="GO:0004950">
    <property type="term" value="F:chemokine receptor activity"/>
    <property type="evidence" value="ECO:0000304"/>
    <property type="project" value="ProtInc"/>
</dbReference>
<dbReference type="GO" id="GO:0004875">
    <property type="term" value="F:complement receptor activity"/>
    <property type="evidence" value="ECO:0000318"/>
    <property type="project" value="GO_Central"/>
</dbReference>
<dbReference type="GO" id="GO:0004930">
    <property type="term" value="F:G protein-coupled receptor activity"/>
    <property type="evidence" value="ECO:0000318"/>
    <property type="project" value="GO_Central"/>
</dbReference>
<dbReference type="GO" id="GO:0038023">
    <property type="term" value="F:signaling receptor activity"/>
    <property type="evidence" value="ECO:0000304"/>
    <property type="project" value="ProtInc"/>
</dbReference>
<dbReference type="GO" id="GO:0006935">
    <property type="term" value="P:chemotaxis"/>
    <property type="evidence" value="ECO:0000314"/>
    <property type="project" value="UniProtKB"/>
</dbReference>
<dbReference type="GO" id="GO:0002430">
    <property type="term" value="P:complement receptor mediated signaling pathway"/>
    <property type="evidence" value="ECO:0000318"/>
    <property type="project" value="GO_Central"/>
</dbReference>
<dbReference type="GO" id="GO:0007186">
    <property type="term" value="P:G protein-coupled receptor signaling pathway"/>
    <property type="evidence" value="ECO:0000314"/>
    <property type="project" value="UniProtKB"/>
</dbReference>
<dbReference type="GO" id="GO:0006955">
    <property type="term" value="P:immune response"/>
    <property type="evidence" value="ECO:0000304"/>
    <property type="project" value="ProtInc"/>
</dbReference>
<dbReference type="GO" id="GO:0006954">
    <property type="term" value="P:inflammatory response"/>
    <property type="evidence" value="ECO:0000318"/>
    <property type="project" value="GO_Central"/>
</dbReference>
<dbReference type="GO" id="GO:0032695">
    <property type="term" value="P:negative regulation of interleukin-12 production"/>
    <property type="evidence" value="ECO:0000250"/>
    <property type="project" value="UniProtKB"/>
</dbReference>
<dbReference type="GO" id="GO:0032088">
    <property type="term" value="P:negative regulation of NF-kappaB transcription factor activity"/>
    <property type="evidence" value="ECO:0000314"/>
    <property type="project" value="UniProtKB"/>
</dbReference>
<dbReference type="GO" id="GO:0007200">
    <property type="term" value="P:phospholipase C-activating G protein-coupled receptor signaling pathway"/>
    <property type="evidence" value="ECO:0000318"/>
    <property type="project" value="GO_Central"/>
</dbReference>
<dbReference type="GO" id="GO:0120162">
    <property type="term" value="P:positive regulation of cold-induced thermogenesis"/>
    <property type="evidence" value="ECO:0000250"/>
    <property type="project" value="YuBioLab"/>
</dbReference>
<dbReference type="GO" id="GO:0007204">
    <property type="term" value="P:positive regulation of cytosolic calcium ion concentration"/>
    <property type="evidence" value="ECO:0000318"/>
    <property type="project" value="GO_Central"/>
</dbReference>
<dbReference type="GO" id="GO:0045600">
    <property type="term" value="P:positive regulation of fat cell differentiation"/>
    <property type="evidence" value="ECO:0000250"/>
    <property type="project" value="UniProtKB"/>
</dbReference>
<dbReference type="GO" id="GO:0010759">
    <property type="term" value="P:positive regulation of macrophage chemotaxis"/>
    <property type="evidence" value="ECO:0000315"/>
    <property type="project" value="DFLAT"/>
</dbReference>
<dbReference type="GO" id="GO:0050848">
    <property type="term" value="P:regulation of calcium-mediated signaling"/>
    <property type="evidence" value="ECO:0000314"/>
    <property type="project" value="UniProtKB"/>
</dbReference>
<dbReference type="GO" id="GO:0001501">
    <property type="term" value="P:skeletal system development"/>
    <property type="evidence" value="ECO:0000304"/>
    <property type="project" value="ProtInc"/>
</dbReference>
<dbReference type="CDD" id="cd15116">
    <property type="entry name" value="7tmA_CMKLR1"/>
    <property type="match status" value="1"/>
</dbReference>
<dbReference type="FunFam" id="1.20.1070.10:FF:000034">
    <property type="entry name" value="G-protein coupled receptor 1"/>
    <property type="match status" value="1"/>
</dbReference>
<dbReference type="Gene3D" id="1.20.1070.10">
    <property type="entry name" value="Rhodopsin 7-helix transmembrane proteins"/>
    <property type="match status" value="1"/>
</dbReference>
<dbReference type="InterPro" id="IPR002258">
    <property type="entry name" value="CML1"/>
</dbReference>
<dbReference type="InterPro" id="IPR000826">
    <property type="entry name" value="Formyl_rcpt-rel"/>
</dbReference>
<dbReference type="InterPro" id="IPR000276">
    <property type="entry name" value="GPCR_Rhodpsn"/>
</dbReference>
<dbReference type="InterPro" id="IPR017452">
    <property type="entry name" value="GPCR_Rhodpsn_7TM"/>
</dbReference>
<dbReference type="PANTHER" id="PTHR24225:SF49">
    <property type="entry name" value="CHEMERIN-LIKE RECEPTOR 1"/>
    <property type="match status" value="1"/>
</dbReference>
<dbReference type="PANTHER" id="PTHR24225">
    <property type="entry name" value="CHEMOTACTIC RECEPTOR"/>
    <property type="match status" value="1"/>
</dbReference>
<dbReference type="Pfam" id="PF00001">
    <property type="entry name" value="7tm_1"/>
    <property type="match status" value="1"/>
</dbReference>
<dbReference type="PRINTS" id="PR01126">
    <property type="entry name" value="DEZORPHANR"/>
</dbReference>
<dbReference type="PRINTS" id="PR00237">
    <property type="entry name" value="GPCRRHODOPSN"/>
</dbReference>
<dbReference type="SUPFAM" id="SSF81321">
    <property type="entry name" value="Family A G protein-coupled receptor-like"/>
    <property type="match status" value="1"/>
</dbReference>
<dbReference type="PROSITE" id="PS00237">
    <property type="entry name" value="G_PROTEIN_RECEP_F1_1"/>
    <property type="match status" value="1"/>
</dbReference>
<dbReference type="PROSITE" id="PS50262">
    <property type="entry name" value="G_PROTEIN_RECEP_F1_2"/>
    <property type="match status" value="1"/>
</dbReference>
<feature type="chain" id="PRO_0000069307" description="Chemerin-like receptor 1">
    <location>
        <begin position="1"/>
        <end position="373"/>
    </location>
</feature>
<feature type="topological domain" description="Extracellular" evidence="3">
    <location>
        <begin position="1"/>
        <end position="41"/>
    </location>
</feature>
<feature type="transmembrane region" description="Helical; Name=1" evidence="3">
    <location>
        <begin position="42"/>
        <end position="64"/>
    </location>
</feature>
<feature type="topological domain" description="Cytoplasmic" evidence="3">
    <location>
        <begin position="65"/>
        <end position="75"/>
    </location>
</feature>
<feature type="transmembrane region" description="Helical; Name=2" evidence="3">
    <location>
        <begin position="76"/>
        <end position="97"/>
    </location>
</feature>
<feature type="topological domain" description="Extracellular" evidence="3">
    <location>
        <begin position="98"/>
        <end position="114"/>
    </location>
</feature>
<feature type="transmembrane region" description="Helical; Name=3" evidence="3">
    <location>
        <begin position="115"/>
        <end position="135"/>
    </location>
</feature>
<feature type="topological domain" description="Cytoplasmic" evidence="3">
    <location>
        <begin position="136"/>
        <end position="154"/>
    </location>
</feature>
<feature type="transmembrane region" description="Helical; Name=4" evidence="3">
    <location>
        <begin position="155"/>
        <end position="176"/>
    </location>
</feature>
<feature type="topological domain" description="Extracellular" evidence="3">
    <location>
        <begin position="177"/>
        <end position="224"/>
    </location>
</feature>
<feature type="transmembrane region" description="Helical; Name=5" evidence="3">
    <location>
        <begin position="225"/>
        <end position="245"/>
    </location>
</feature>
<feature type="topological domain" description="Cytoplasmic" evidence="3">
    <location>
        <begin position="246"/>
        <end position="261"/>
    </location>
</feature>
<feature type="transmembrane region" description="Helical; Name=6" evidence="3">
    <location>
        <begin position="262"/>
        <end position="282"/>
    </location>
</feature>
<feature type="topological domain" description="Extracellular" evidence="3">
    <location>
        <begin position="283"/>
        <end position="300"/>
    </location>
</feature>
<feature type="transmembrane region" description="Helical; Name=7" evidence="3">
    <location>
        <begin position="301"/>
        <end position="320"/>
    </location>
</feature>
<feature type="topological domain" description="Cytoplasmic" evidence="3">
    <location>
        <begin position="321"/>
        <end position="373"/>
    </location>
</feature>
<feature type="region of interest" description="Disordered" evidence="5">
    <location>
        <begin position="341"/>
        <end position="373"/>
    </location>
</feature>
<feature type="compositionally biased region" description="Polar residues" evidence="5">
    <location>
        <begin position="344"/>
        <end position="363"/>
    </location>
</feature>
<feature type="compositionally biased region" description="Basic and acidic residues" evidence="5">
    <location>
        <begin position="364"/>
        <end position="373"/>
    </location>
</feature>
<feature type="modified residue" description="Phosphoserine" evidence="2">
    <location>
        <position position="339"/>
    </location>
</feature>
<feature type="modified residue" description="Phosphothreonine" evidence="2">
    <location>
        <position position="342"/>
    </location>
</feature>
<feature type="modified residue" description="Phosphoserine" evidence="2">
    <location>
        <position position="349"/>
    </location>
</feature>
<feature type="modified residue" description="Phosphoserine" evidence="2">
    <location>
        <position position="352"/>
    </location>
</feature>
<feature type="modified residue" description="Phosphoserine" evidence="1">
    <location>
        <position position="358"/>
    </location>
</feature>
<feature type="glycosylation site" description="N-linked (GlcNAc...) asparagine" evidence="3">
    <location>
        <position position="9"/>
    </location>
</feature>
<feature type="glycosylation site" description="N-linked (GlcNAc...) asparagine" evidence="3">
    <location>
        <position position="192"/>
    </location>
</feature>
<feature type="disulfide bond" evidence="4">
    <location>
        <begin position="112"/>
        <end position="189"/>
    </location>
</feature>
<feature type="splice variant" id="VSP_001985" description="In isoform B." evidence="15 17 18">
    <location>
        <begin position="1"/>
        <end position="2"/>
    </location>
</feature>
<feature type="sequence conflict" description="In Ref. 2; AAC51258." evidence="19" ref="2">
    <original>Q</original>
    <variation>H</variation>
    <location>
        <position position="248"/>
    </location>
</feature>
<feature type="helix" evidence="21">
    <location>
        <begin position="35"/>
        <end position="67"/>
    </location>
</feature>
<feature type="helix" evidence="21">
    <location>
        <begin position="73"/>
        <end position="100"/>
    </location>
</feature>
<feature type="strand" evidence="22">
    <location>
        <begin position="101"/>
        <end position="103"/>
    </location>
</feature>
<feature type="helix" evidence="21">
    <location>
        <begin position="109"/>
        <end position="142"/>
    </location>
</feature>
<feature type="helix" evidence="21">
    <location>
        <begin position="144"/>
        <end position="150"/>
    </location>
</feature>
<feature type="helix" evidence="21">
    <location>
        <begin position="153"/>
        <end position="171"/>
    </location>
</feature>
<feature type="helix" evidence="21">
    <location>
        <begin position="173"/>
        <end position="176"/>
    </location>
</feature>
<feature type="strand" evidence="21">
    <location>
        <begin position="180"/>
        <end position="183"/>
    </location>
</feature>
<feature type="strand" evidence="21">
    <location>
        <begin position="186"/>
        <end position="189"/>
    </location>
</feature>
<feature type="helix" evidence="21">
    <location>
        <begin position="211"/>
        <end position="249"/>
    </location>
</feature>
<feature type="strand" evidence="22">
    <location>
        <begin position="254"/>
        <end position="256"/>
    </location>
</feature>
<feature type="helix" evidence="21">
    <location>
        <begin position="257"/>
        <end position="282"/>
    </location>
</feature>
<feature type="turn" evidence="21">
    <location>
        <begin position="283"/>
        <end position="285"/>
    </location>
</feature>
<feature type="helix" evidence="21">
    <location>
        <begin position="286"/>
        <end position="288"/>
    </location>
</feature>
<feature type="helix" evidence="21">
    <location>
        <begin position="291"/>
        <end position="316"/>
    </location>
</feature>
<feature type="turn" evidence="22">
    <location>
        <begin position="317"/>
        <end position="319"/>
    </location>
</feature>
<feature type="helix" evidence="21">
    <location>
        <begin position="320"/>
        <end position="327"/>
    </location>
</feature>
<evidence type="ECO:0000250" key="1">
    <source>
        <dbReference type="UniProtKB" id="O35786"/>
    </source>
</evidence>
<evidence type="ECO:0000250" key="2">
    <source>
        <dbReference type="UniProtKB" id="P97468"/>
    </source>
</evidence>
<evidence type="ECO:0000255" key="3"/>
<evidence type="ECO:0000255" key="4">
    <source>
        <dbReference type="PROSITE-ProRule" id="PRU00521"/>
    </source>
</evidence>
<evidence type="ECO:0000256" key="5">
    <source>
        <dbReference type="SAM" id="MobiDB-lite"/>
    </source>
</evidence>
<evidence type="ECO:0000269" key="6">
    <source>
    </source>
</evidence>
<evidence type="ECO:0000269" key="7">
    <source>
    </source>
</evidence>
<evidence type="ECO:0000269" key="8">
    <source>
    </source>
</evidence>
<evidence type="ECO:0000269" key="9">
    <source>
    </source>
</evidence>
<evidence type="ECO:0000269" key="10">
    <source>
    </source>
</evidence>
<evidence type="ECO:0000269" key="11">
    <source>
    </source>
</evidence>
<evidence type="ECO:0000269" key="12">
    <source>
    </source>
</evidence>
<evidence type="ECO:0000269" key="13">
    <source>
    </source>
</evidence>
<evidence type="ECO:0000269" key="14">
    <source>
    </source>
</evidence>
<evidence type="ECO:0000303" key="15">
    <source>
    </source>
</evidence>
<evidence type="ECO:0000303" key="16">
    <source>
    </source>
</evidence>
<evidence type="ECO:0000303" key="17">
    <source ref="4"/>
</evidence>
<evidence type="ECO:0000303" key="18">
    <source ref="6"/>
</evidence>
<evidence type="ECO:0000305" key="19"/>
<evidence type="ECO:0000312" key="20">
    <source>
        <dbReference type="HGNC" id="HGNC:2121"/>
    </source>
</evidence>
<evidence type="ECO:0007829" key="21">
    <source>
        <dbReference type="PDB" id="7YKD"/>
    </source>
</evidence>
<evidence type="ECO:0007829" key="22">
    <source>
        <dbReference type="PDB" id="8SG1"/>
    </source>
</evidence>
<keyword id="KW-0002">3D-structure</keyword>
<keyword id="KW-0025">Alternative splicing</keyword>
<keyword id="KW-1003">Cell membrane</keyword>
<keyword id="KW-1015">Disulfide bond</keyword>
<keyword id="KW-0297">G-protein coupled receptor</keyword>
<keyword id="KW-0325">Glycoprotein</keyword>
<keyword id="KW-0472">Membrane</keyword>
<keyword id="KW-0597">Phosphoprotein</keyword>
<keyword id="KW-1267">Proteomics identification</keyword>
<keyword id="KW-0675">Receptor</keyword>
<keyword id="KW-1185">Reference proteome</keyword>
<keyword id="KW-0807">Transducer</keyword>
<keyword id="KW-0812">Transmembrane</keyword>
<keyword id="KW-1133">Transmembrane helix</keyword>
<name>CML1_HUMAN</name>
<sequence>MRMEDEDYNTSISYGDEYPDYLDSIVVLEDLSPLEARVTRIFLVVVYSIVCFLGILGNGLVIIIATFKMKKTVNMVWFLNLAVADFLFNVFLPIHITYAAMDYHWVFGTAMCKISNFLLIHNMFTSVFLLTIISSDRCISVLLPVWSQNHRSVRLAYMACMVIWVLAFFLSSPSLVFRDTANLHGKISCFNNFSLSTPGSSSWPTHSQMDPVGYSRHMVVTVTRFLCGFLVPVLIITACYLTIVCKLQRNRLAKTKKPFKIIVTIIITFFLCWCPYHTLNLLELHHTAMPGSVFSLGLPLATALAIANSCMNPILYVFMGQDFKKFKVALFSRLVNALSEDTGHSSYPSHRSFTKMSSMNERTSMNERETGML</sequence>
<organism>
    <name type="scientific">Homo sapiens</name>
    <name type="common">Human</name>
    <dbReference type="NCBI Taxonomy" id="9606"/>
    <lineage>
        <taxon>Eukaryota</taxon>
        <taxon>Metazoa</taxon>
        <taxon>Chordata</taxon>
        <taxon>Craniata</taxon>
        <taxon>Vertebrata</taxon>
        <taxon>Euteleostomi</taxon>
        <taxon>Mammalia</taxon>
        <taxon>Eutheria</taxon>
        <taxon>Euarchontoglires</taxon>
        <taxon>Primates</taxon>
        <taxon>Haplorrhini</taxon>
        <taxon>Catarrhini</taxon>
        <taxon>Hominidae</taxon>
        <taxon>Homo</taxon>
    </lineage>
</organism>